<gene>
    <name evidence="1" type="primary">fieF</name>
    <name type="ordered locus">KPN78578_41770</name>
    <name type="ORF">KPN_04222</name>
</gene>
<reference key="1">
    <citation type="submission" date="2006-09" db="EMBL/GenBank/DDBJ databases">
        <authorList>
            <consortium name="The Klebsiella pneumonia Genome Sequencing Project"/>
            <person name="McClelland M."/>
            <person name="Sanderson E.K."/>
            <person name="Spieth J."/>
            <person name="Clifton W.S."/>
            <person name="Latreille P."/>
            <person name="Sabo A."/>
            <person name="Pepin K."/>
            <person name="Bhonagiri V."/>
            <person name="Porwollik S."/>
            <person name="Ali J."/>
            <person name="Wilson R.K."/>
        </authorList>
    </citation>
    <scope>NUCLEOTIDE SEQUENCE [LARGE SCALE GENOMIC DNA]</scope>
    <source>
        <strain>ATCC 700721 / MGH 78578</strain>
    </source>
</reference>
<keyword id="KW-0997">Cell inner membrane</keyword>
<keyword id="KW-1003">Cell membrane</keyword>
<keyword id="KW-0406">Ion transport</keyword>
<keyword id="KW-0408">Iron</keyword>
<keyword id="KW-0410">Iron transport</keyword>
<keyword id="KW-0472">Membrane</keyword>
<keyword id="KW-0479">Metal-binding</keyword>
<keyword id="KW-0812">Transmembrane</keyword>
<keyword id="KW-1133">Transmembrane helix</keyword>
<keyword id="KW-0813">Transport</keyword>
<keyword id="KW-0862">Zinc</keyword>
<keyword id="KW-0864">Zinc transport</keyword>
<dbReference type="EMBL" id="CP000647">
    <property type="protein sequence ID" value="ABR79601.1"/>
    <property type="molecule type" value="Genomic_DNA"/>
</dbReference>
<dbReference type="RefSeq" id="WP_002882907.1">
    <property type="nucleotide sequence ID" value="NC_009648.1"/>
</dbReference>
<dbReference type="SMR" id="A6TGB7"/>
<dbReference type="STRING" id="272620.KPN_04222"/>
<dbReference type="PaxDb" id="272620-KPN_04222"/>
<dbReference type="EnsemblBacteria" id="ABR79601">
    <property type="protein sequence ID" value="ABR79601"/>
    <property type="gene ID" value="KPN_04222"/>
</dbReference>
<dbReference type="GeneID" id="69757896"/>
<dbReference type="KEGG" id="kpn:KPN_04222"/>
<dbReference type="HOGENOM" id="CLU_013430_3_0_6"/>
<dbReference type="Proteomes" id="UP000000265">
    <property type="component" value="Chromosome"/>
</dbReference>
<dbReference type="GO" id="GO:0005886">
    <property type="term" value="C:plasma membrane"/>
    <property type="evidence" value="ECO:0007669"/>
    <property type="project" value="UniProtKB-SubCell"/>
</dbReference>
<dbReference type="GO" id="GO:0015086">
    <property type="term" value="F:cadmium ion transmembrane transporter activity"/>
    <property type="evidence" value="ECO:0007669"/>
    <property type="project" value="UniProtKB-UniRule"/>
</dbReference>
<dbReference type="GO" id="GO:0015093">
    <property type="term" value="F:ferrous iron transmembrane transporter activity"/>
    <property type="evidence" value="ECO:0007669"/>
    <property type="project" value="TreeGrafter"/>
</dbReference>
<dbReference type="GO" id="GO:0046872">
    <property type="term" value="F:metal ion binding"/>
    <property type="evidence" value="ECO:0007669"/>
    <property type="project" value="UniProtKB-KW"/>
</dbReference>
<dbReference type="GO" id="GO:0015341">
    <property type="term" value="F:zinc efflux antiporter activity"/>
    <property type="evidence" value="ECO:0007669"/>
    <property type="project" value="TreeGrafter"/>
</dbReference>
<dbReference type="GO" id="GO:0006882">
    <property type="term" value="P:intracellular zinc ion homeostasis"/>
    <property type="evidence" value="ECO:0007669"/>
    <property type="project" value="TreeGrafter"/>
</dbReference>
<dbReference type="FunFam" id="1.20.1510.10:FF:000001">
    <property type="entry name" value="Ferrous-iron efflux pump FieF"/>
    <property type="match status" value="1"/>
</dbReference>
<dbReference type="FunFam" id="3.30.70.1350:FF:000002">
    <property type="entry name" value="Ferrous-iron efflux pump FieF"/>
    <property type="match status" value="1"/>
</dbReference>
<dbReference type="Gene3D" id="1.20.1510.10">
    <property type="entry name" value="Cation efflux protein transmembrane domain"/>
    <property type="match status" value="1"/>
</dbReference>
<dbReference type="Gene3D" id="3.30.70.1350">
    <property type="entry name" value="Cation efflux protein, cytoplasmic domain"/>
    <property type="match status" value="1"/>
</dbReference>
<dbReference type="HAMAP" id="MF_01425">
    <property type="entry name" value="Cation_efflux_FieF"/>
    <property type="match status" value="1"/>
</dbReference>
<dbReference type="InterPro" id="IPR002524">
    <property type="entry name" value="Cation_efflux"/>
</dbReference>
<dbReference type="InterPro" id="IPR027470">
    <property type="entry name" value="Cation_efflux_CTD"/>
</dbReference>
<dbReference type="InterPro" id="IPR036837">
    <property type="entry name" value="Cation_efflux_CTD_sf"/>
</dbReference>
<dbReference type="InterPro" id="IPR023783">
    <property type="entry name" value="Cation_efflux_FieF"/>
</dbReference>
<dbReference type="InterPro" id="IPR027469">
    <property type="entry name" value="Cation_efflux_TMD_sf"/>
</dbReference>
<dbReference type="InterPro" id="IPR050291">
    <property type="entry name" value="CDF_Transporter"/>
</dbReference>
<dbReference type="NCBIfam" id="TIGR01297">
    <property type="entry name" value="CDF"/>
    <property type="match status" value="1"/>
</dbReference>
<dbReference type="NCBIfam" id="NF007064">
    <property type="entry name" value="PRK09509.1"/>
    <property type="match status" value="1"/>
</dbReference>
<dbReference type="PANTHER" id="PTHR43840:SF41">
    <property type="entry name" value="CATION-EFFLUX PUMP FIEF"/>
    <property type="match status" value="1"/>
</dbReference>
<dbReference type="PANTHER" id="PTHR43840">
    <property type="entry name" value="MITOCHONDRIAL METAL TRANSPORTER 1-RELATED"/>
    <property type="match status" value="1"/>
</dbReference>
<dbReference type="Pfam" id="PF01545">
    <property type="entry name" value="Cation_efflux"/>
    <property type="match status" value="1"/>
</dbReference>
<dbReference type="Pfam" id="PF16916">
    <property type="entry name" value="ZT_dimer"/>
    <property type="match status" value="1"/>
</dbReference>
<dbReference type="SUPFAM" id="SSF160240">
    <property type="entry name" value="Cation efflux protein cytoplasmic domain-like"/>
    <property type="match status" value="1"/>
</dbReference>
<dbReference type="SUPFAM" id="SSF161111">
    <property type="entry name" value="Cation efflux protein transmembrane domain-like"/>
    <property type="match status" value="1"/>
</dbReference>
<feature type="chain" id="PRO_1000024326" description="Cation-efflux pump FieF">
    <location>
        <begin position="1"/>
        <end position="300"/>
    </location>
</feature>
<feature type="transmembrane region" description="Helical" evidence="1">
    <location>
        <begin position="24"/>
        <end position="44"/>
    </location>
</feature>
<feature type="transmembrane region" description="Helical" evidence="1">
    <location>
        <begin position="82"/>
        <end position="102"/>
    </location>
</feature>
<feature type="transmembrane region" description="Helical" evidence="1">
    <location>
        <begin position="114"/>
        <end position="134"/>
    </location>
</feature>
<feature type="transmembrane region" description="Helical" evidence="1">
    <location>
        <begin position="156"/>
        <end position="176"/>
    </location>
</feature>
<feature type="transmembrane region" description="Helical" evidence="1">
    <location>
        <begin position="178"/>
        <end position="198"/>
    </location>
</feature>
<feature type="binding site" evidence="1">
    <location>
        <position position="45"/>
    </location>
    <ligand>
        <name>Zn(2+)</name>
        <dbReference type="ChEBI" id="CHEBI:29105"/>
    </ligand>
</feature>
<feature type="binding site" evidence="1">
    <location>
        <position position="49"/>
    </location>
    <ligand>
        <name>Zn(2+)</name>
        <dbReference type="ChEBI" id="CHEBI:29105"/>
    </ligand>
</feature>
<feature type="binding site" evidence="1">
    <location>
        <position position="153"/>
    </location>
    <ligand>
        <name>Zn(2+)</name>
        <dbReference type="ChEBI" id="CHEBI:29105"/>
    </ligand>
</feature>
<feature type="binding site" evidence="1">
    <location>
        <position position="157"/>
    </location>
    <ligand>
        <name>Zn(2+)</name>
        <dbReference type="ChEBI" id="CHEBI:29105"/>
    </ligand>
</feature>
<accession>A6TGB7</accession>
<sequence>MNQSYGRLVSRAAIAATAMASALLLIKIFAWWYTGSVSILAALVDSLVDIAASLTNLLVVRYSLQPADEEHTFGHGKAESLAALAQSMFISGSALFLFLTGIQHLVRPEPLQAAGVGVVVTLIALVSTLALVTFQRWVVRKTQSQAVRADMLHYQSDVMMNGAILVALGLSWYGWHRADALFALGIGIYILYSALRMGYEAVQSLLDRALPDEERQDIITIVTAWPGIRGAHDLRTRQSGPTRFIQIHLEMEDNLPLVQAHVIADQVEQAILRRFPGSDVIIHQDPSSVVPAAQQGFFER</sequence>
<organism>
    <name type="scientific">Klebsiella pneumoniae subsp. pneumoniae (strain ATCC 700721 / MGH 78578)</name>
    <dbReference type="NCBI Taxonomy" id="272620"/>
    <lineage>
        <taxon>Bacteria</taxon>
        <taxon>Pseudomonadati</taxon>
        <taxon>Pseudomonadota</taxon>
        <taxon>Gammaproteobacteria</taxon>
        <taxon>Enterobacterales</taxon>
        <taxon>Enterobacteriaceae</taxon>
        <taxon>Klebsiella/Raoultella group</taxon>
        <taxon>Klebsiella</taxon>
        <taxon>Klebsiella pneumoniae complex</taxon>
    </lineage>
</organism>
<comment type="function">
    <text evidence="1">Divalent metal cation transporter which exports Zn(2+), Cd(2+) and possibly Fe(2+). May be involved in zinc and iron detoxification by efflux.</text>
</comment>
<comment type="catalytic activity">
    <reaction evidence="1">
        <text>Zn(2+)(in) + H(+)(out) = Zn(2+)(out) + H(+)(in)</text>
        <dbReference type="Rhea" id="RHEA:28839"/>
        <dbReference type="ChEBI" id="CHEBI:15378"/>
        <dbReference type="ChEBI" id="CHEBI:29105"/>
    </reaction>
</comment>
<comment type="catalytic activity">
    <reaction evidence="1">
        <text>Cd(2+)(in) + H(+)(out) = Cd(2+)(out) + H(+)(in)</text>
        <dbReference type="Rhea" id="RHEA:28739"/>
        <dbReference type="ChEBI" id="CHEBI:15378"/>
        <dbReference type="ChEBI" id="CHEBI:48775"/>
    </reaction>
</comment>
<comment type="catalytic activity">
    <reaction evidence="1">
        <text>Fe(2+)(in) + H(+)(out) = Fe(2+)(out) + H(+)(in)</text>
        <dbReference type="Rhea" id="RHEA:29439"/>
        <dbReference type="ChEBI" id="CHEBI:15378"/>
        <dbReference type="ChEBI" id="CHEBI:29033"/>
    </reaction>
</comment>
<comment type="subunit">
    <text evidence="1">Homodimer.</text>
</comment>
<comment type="subcellular location">
    <subcellularLocation>
        <location evidence="1">Cell inner membrane</location>
        <topology evidence="1">Multi-pass membrane protein</topology>
    </subcellularLocation>
</comment>
<comment type="similarity">
    <text evidence="1">Belongs to the cation diffusion facilitator (CDF) transporter (TC 2.A.4) family. FieF subfamily.</text>
</comment>
<proteinExistence type="inferred from homology"/>
<name>FIEF_KLEP7</name>
<evidence type="ECO:0000255" key="1">
    <source>
        <dbReference type="HAMAP-Rule" id="MF_01425"/>
    </source>
</evidence>
<protein>
    <recommendedName>
        <fullName evidence="1">Cation-efflux pump FieF</fullName>
    </recommendedName>
</protein>